<accession>P08288</accession>
<feature type="initiator methionine" description="Removed" evidence="3">
    <location>
        <position position="1"/>
    </location>
</feature>
<feature type="chain" id="PRO_0000195932" description="Histone H1.11R">
    <location>
        <begin position="2"/>
        <end position="219"/>
    </location>
</feature>
<feature type="domain" description="H15" evidence="1">
    <location>
        <begin position="38"/>
        <end position="111"/>
    </location>
</feature>
<feature type="region of interest" description="Disordered" evidence="2">
    <location>
        <begin position="1"/>
        <end position="42"/>
    </location>
</feature>
<feature type="region of interest" description="Disordered" evidence="2">
    <location>
        <begin position="89"/>
        <end position="219"/>
    </location>
</feature>
<feature type="compositionally biased region" description="Low complexity" evidence="2">
    <location>
        <begin position="1"/>
        <end position="20"/>
    </location>
</feature>
<feature type="compositionally biased region" description="Low complexity" evidence="2">
    <location>
        <begin position="28"/>
        <end position="40"/>
    </location>
</feature>
<feature type="compositionally biased region" description="Basic residues" evidence="2">
    <location>
        <begin position="121"/>
        <end position="135"/>
    </location>
</feature>
<feature type="compositionally biased region" description="Basic residues" evidence="2">
    <location>
        <begin position="143"/>
        <end position="160"/>
    </location>
</feature>
<feature type="compositionally biased region" description="Basic residues" evidence="2">
    <location>
        <begin position="168"/>
        <end position="183"/>
    </location>
</feature>
<feature type="compositionally biased region" description="Basic residues" evidence="2">
    <location>
        <begin position="192"/>
        <end position="219"/>
    </location>
</feature>
<keyword id="KW-0158">Chromosome</keyword>
<keyword id="KW-0238">DNA-binding</keyword>
<keyword id="KW-0539">Nucleus</keyword>
<keyword id="KW-1185">Reference proteome</keyword>
<name>H11R_CHICK</name>
<evidence type="ECO:0000255" key="1">
    <source>
        <dbReference type="PROSITE-ProRule" id="PRU00837"/>
    </source>
</evidence>
<evidence type="ECO:0000256" key="2">
    <source>
        <dbReference type="SAM" id="MobiDB-lite"/>
    </source>
</evidence>
<evidence type="ECO:0000305" key="3"/>
<proteinExistence type="inferred from homology"/>
<protein>
    <recommendedName>
        <fullName>Histone H1.11R</fullName>
    </recommendedName>
</protein>
<sequence length="219" mass="21803">MAETAPAAAPAAAPAPAAKAAAKKPKKAAGGAKARKPAGPSVTELITKAVSASKERKGLSLAALKKALAAGGYDVEKNNSRIKLGLKSLVSKGTLVQTKGTGASGSFRLSKKPGEGLEKAPKKKASAAKPKKAAAKKPAAAAKKPKKAVAVKKSPKKAKKPAASATKKSVKSPKKAAKPKKAVAAKSPAKAKAVKPKAAKPKAAKPKAAKAKKAAAKKK</sequence>
<comment type="function">
    <text>Histones H1 are necessary for the condensation of nucleosome chains into higher-order structures.</text>
</comment>
<comment type="subcellular location">
    <subcellularLocation>
        <location>Nucleus</location>
    </subcellularLocation>
    <subcellularLocation>
        <location>Chromosome</location>
    </subcellularLocation>
</comment>
<comment type="similarity">
    <text evidence="1">Belongs to the histone H1/H5 family.</text>
</comment>
<reference key="1">
    <citation type="journal article" date="1987" name="J. Biol. Chem.">
        <title>Characterization of the chicken histone H1 gene complement. Generation of a complete set of vertebrate H1 protein sequences.</title>
        <authorList>
            <person name="Coles L.S."/>
            <person name="Robins A.J."/>
            <person name="Madley L.K."/>
            <person name="Wells J.R.E."/>
        </authorList>
    </citation>
    <scope>NUCLEOTIDE SEQUENCE [GENOMIC DNA]</scope>
</reference>
<organism>
    <name type="scientific">Gallus gallus</name>
    <name type="common">Chicken</name>
    <dbReference type="NCBI Taxonomy" id="9031"/>
    <lineage>
        <taxon>Eukaryota</taxon>
        <taxon>Metazoa</taxon>
        <taxon>Chordata</taxon>
        <taxon>Craniata</taxon>
        <taxon>Vertebrata</taxon>
        <taxon>Euteleostomi</taxon>
        <taxon>Archelosauria</taxon>
        <taxon>Archosauria</taxon>
        <taxon>Dinosauria</taxon>
        <taxon>Saurischia</taxon>
        <taxon>Theropoda</taxon>
        <taxon>Coelurosauria</taxon>
        <taxon>Aves</taxon>
        <taxon>Neognathae</taxon>
        <taxon>Galloanserae</taxon>
        <taxon>Galliformes</taxon>
        <taxon>Phasianidae</taxon>
        <taxon>Phasianinae</taxon>
        <taxon>Gallus</taxon>
    </lineage>
</organism>
<dbReference type="EMBL" id="M17020">
    <property type="protein sequence ID" value="AAA48790.1"/>
    <property type="molecule type" value="Genomic_DNA"/>
</dbReference>
<dbReference type="PIR" id="C28456">
    <property type="entry name" value="C28456"/>
</dbReference>
<dbReference type="RefSeq" id="NP_001075172.1">
    <property type="nucleotide sequence ID" value="NM_001081703.1"/>
</dbReference>
<dbReference type="SMR" id="P08288"/>
<dbReference type="FunCoup" id="P08288">
    <property type="interactions" value="731"/>
</dbReference>
<dbReference type="STRING" id="9031.ENSGALP00000019205"/>
<dbReference type="PaxDb" id="9031-ENSGALP00000019205"/>
<dbReference type="GeneID" id="427896"/>
<dbReference type="KEGG" id="gga:427896"/>
<dbReference type="CTD" id="427896"/>
<dbReference type="VEuPathDB" id="HostDB:geneid_427896"/>
<dbReference type="eggNOG" id="KOG4012">
    <property type="taxonomic scope" value="Eukaryota"/>
</dbReference>
<dbReference type="InParanoid" id="P08288"/>
<dbReference type="OMA" id="PPYIEMV"/>
<dbReference type="OrthoDB" id="9634976at2759"/>
<dbReference type="PRO" id="PR:P08288"/>
<dbReference type="Proteomes" id="UP000000539">
    <property type="component" value="Unassembled WGS sequence"/>
</dbReference>
<dbReference type="GO" id="GO:0000786">
    <property type="term" value="C:nucleosome"/>
    <property type="evidence" value="ECO:0007669"/>
    <property type="project" value="InterPro"/>
</dbReference>
<dbReference type="GO" id="GO:0005634">
    <property type="term" value="C:nucleus"/>
    <property type="evidence" value="ECO:0000318"/>
    <property type="project" value="GO_Central"/>
</dbReference>
<dbReference type="GO" id="GO:0003690">
    <property type="term" value="F:double-stranded DNA binding"/>
    <property type="evidence" value="ECO:0000318"/>
    <property type="project" value="GO_Central"/>
</dbReference>
<dbReference type="GO" id="GO:0031492">
    <property type="term" value="F:nucleosomal DNA binding"/>
    <property type="evidence" value="ECO:0000318"/>
    <property type="project" value="GO_Central"/>
</dbReference>
<dbReference type="GO" id="GO:0030527">
    <property type="term" value="F:structural constituent of chromatin"/>
    <property type="evidence" value="ECO:0007669"/>
    <property type="project" value="InterPro"/>
</dbReference>
<dbReference type="GO" id="GO:0030261">
    <property type="term" value="P:chromosome condensation"/>
    <property type="evidence" value="ECO:0000318"/>
    <property type="project" value="GO_Central"/>
</dbReference>
<dbReference type="GO" id="GO:0045910">
    <property type="term" value="P:negative regulation of DNA recombination"/>
    <property type="evidence" value="ECO:0000318"/>
    <property type="project" value="GO_Central"/>
</dbReference>
<dbReference type="GO" id="GO:0006334">
    <property type="term" value="P:nucleosome assembly"/>
    <property type="evidence" value="ECO:0007669"/>
    <property type="project" value="InterPro"/>
</dbReference>
<dbReference type="CDD" id="cd00073">
    <property type="entry name" value="H15"/>
    <property type="match status" value="1"/>
</dbReference>
<dbReference type="FunFam" id="1.10.10.10:FF:000075">
    <property type="entry name" value="Histone H1 like"/>
    <property type="match status" value="1"/>
</dbReference>
<dbReference type="Gene3D" id="1.10.10.10">
    <property type="entry name" value="Winged helix-like DNA-binding domain superfamily/Winged helix DNA-binding domain"/>
    <property type="match status" value="1"/>
</dbReference>
<dbReference type="InterPro" id="IPR005819">
    <property type="entry name" value="H1/H5"/>
</dbReference>
<dbReference type="InterPro" id="IPR005818">
    <property type="entry name" value="Histone_H1/H5_H15"/>
</dbReference>
<dbReference type="InterPro" id="IPR036388">
    <property type="entry name" value="WH-like_DNA-bd_sf"/>
</dbReference>
<dbReference type="InterPro" id="IPR036390">
    <property type="entry name" value="WH_DNA-bd_sf"/>
</dbReference>
<dbReference type="Pfam" id="PF00538">
    <property type="entry name" value="Linker_histone"/>
    <property type="match status" value="1"/>
</dbReference>
<dbReference type="PRINTS" id="PR00624">
    <property type="entry name" value="HISTONEH5"/>
</dbReference>
<dbReference type="SMART" id="SM00526">
    <property type="entry name" value="H15"/>
    <property type="match status" value="1"/>
</dbReference>
<dbReference type="SUPFAM" id="SSF46785">
    <property type="entry name" value="Winged helix' DNA-binding domain"/>
    <property type="match status" value="1"/>
</dbReference>
<dbReference type="PROSITE" id="PS51504">
    <property type="entry name" value="H15"/>
    <property type="match status" value="1"/>
</dbReference>